<comment type="function">
    <text evidence="1">Provides the (R)-glutamate required for cell wall biosynthesis.</text>
</comment>
<comment type="catalytic activity">
    <reaction evidence="1">
        <text>L-glutamate = D-glutamate</text>
        <dbReference type="Rhea" id="RHEA:12813"/>
        <dbReference type="ChEBI" id="CHEBI:29985"/>
        <dbReference type="ChEBI" id="CHEBI:29986"/>
        <dbReference type="EC" id="5.1.1.3"/>
    </reaction>
</comment>
<comment type="pathway">
    <text evidence="1">Cell wall biogenesis; peptidoglycan biosynthesis.</text>
</comment>
<comment type="similarity">
    <text evidence="1">Belongs to the aspartate/glutamate racemases family.</text>
</comment>
<name>MURI_EXIS2</name>
<organism>
    <name type="scientific">Exiguobacterium sibiricum (strain DSM 17290 / CCUG 55495 / CIP 109462 / JCM 13490 / 255-15)</name>
    <dbReference type="NCBI Taxonomy" id="262543"/>
    <lineage>
        <taxon>Bacteria</taxon>
        <taxon>Bacillati</taxon>
        <taxon>Bacillota</taxon>
        <taxon>Bacilli</taxon>
        <taxon>Bacillales</taxon>
        <taxon>Bacillales Family XII. Incertae Sedis</taxon>
        <taxon>Exiguobacterium</taxon>
    </lineage>
</organism>
<gene>
    <name evidence="1" type="primary">murI</name>
    <name type="ordered locus">Exig_2153</name>
</gene>
<sequence>MNRSIGVLDSGVGGLTVARELMRQLPHEQIIYVGDTLRCPYGPRPEEEIRQFTWEMIDFLVAQGVKLIVIACNTATAVVLKEARQKLSIPVIGVIDPGARAAVKVTRSKRIGVIGTKMTIESNSYEKALRHVEGQVVVESLSCPPFVPLVESSQTSGPYVERVVANTLKPLLSYDMDTLILGCTHYPLLAEVIGRVIGPNVQLISSGDETALEVSALLDYNGITADLDRIPEHVYHATGDTRSFERIASDWLHHPVQAKRLVLGTEEEKCV</sequence>
<accession>B1YJW7</accession>
<keyword id="KW-0133">Cell shape</keyword>
<keyword id="KW-0961">Cell wall biogenesis/degradation</keyword>
<keyword id="KW-0413">Isomerase</keyword>
<keyword id="KW-0573">Peptidoglycan synthesis</keyword>
<keyword id="KW-1185">Reference proteome</keyword>
<dbReference type="EC" id="5.1.1.3" evidence="1"/>
<dbReference type="EMBL" id="CP001022">
    <property type="protein sequence ID" value="ACB61605.1"/>
    <property type="molecule type" value="Genomic_DNA"/>
</dbReference>
<dbReference type="SMR" id="B1YJW7"/>
<dbReference type="STRING" id="262543.Exig_2153"/>
<dbReference type="KEGG" id="esi:Exig_2153"/>
<dbReference type="eggNOG" id="COG0796">
    <property type="taxonomic scope" value="Bacteria"/>
</dbReference>
<dbReference type="HOGENOM" id="CLU_052344_0_2_9"/>
<dbReference type="OrthoDB" id="9801055at2"/>
<dbReference type="UniPathway" id="UPA00219"/>
<dbReference type="Proteomes" id="UP000001681">
    <property type="component" value="Chromosome"/>
</dbReference>
<dbReference type="GO" id="GO:0008881">
    <property type="term" value="F:glutamate racemase activity"/>
    <property type="evidence" value="ECO:0007669"/>
    <property type="project" value="UniProtKB-UniRule"/>
</dbReference>
<dbReference type="GO" id="GO:0071555">
    <property type="term" value="P:cell wall organization"/>
    <property type="evidence" value="ECO:0007669"/>
    <property type="project" value="UniProtKB-KW"/>
</dbReference>
<dbReference type="GO" id="GO:0009252">
    <property type="term" value="P:peptidoglycan biosynthetic process"/>
    <property type="evidence" value="ECO:0007669"/>
    <property type="project" value="UniProtKB-UniRule"/>
</dbReference>
<dbReference type="GO" id="GO:0008360">
    <property type="term" value="P:regulation of cell shape"/>
    <property type="evidence" value="ECO:0007669"/>
    <property type="project" value="UniProtKB-KW"/>
</dbReference>
<dbReference type="FunFam" id="3.40.50.1860:FF:000002">
    <property type="entry name" value="Glutamate racemase"/>
    <property type="match status" value="1"/>
</dbReference>
<dbReference type="Gene3D" id="3.40.50.1860">
    <property type="match status" value="2"/>
</dbReference>
<dbReference type="HAMAP" id="MF_00258">
    <property type="entry name" value="Glu_racemase"/>
    <property type="match status" value="1"/>
</dbReference>
<dbReference type="InterPro" id="IPR015942">
    <property type="entry name" value="Asp/Glu/hydantoin_racemase"/>
</dbReference>
<dbReference type="InterPro" id="IPR001920">
    <property type="entry name" value="Asp/Glu_race"/>
</dbReference>
<dbReference type="InterPro" id="IPR018187">
    <property type="entry name" value="Asp/Glu_racemase_AS_1"/>
</dbReference>
<dbReference type="InterPro" id="IPR033134">
    <property type="entry name" value="Asp/Glu_racemase_AS_2"/>
</dbReference>
<dbReference type="InterPro" id="IPR004391">
    <property type="entry name" value="Glu_race"/>
</dbReference>
<dbReference type="NCBIfam" id="TIGR00067">
    <property type="entry name" value="glut_race"/>
    <property type="match status" value="1"/>
</dbReference>
<dbReference type="NCBIfam" id="NF002035">
    <property type="entry name" value="PRK00865.1-3"/>
    <property type="match status" value="1"/>
</dbReference>
<dbReference type="PANTHER" id="PTHR21198">
    <property type="entry name" value="GLUTAMATE RACEMASE"/>
    <property type="match status" value="1"/>
</dbReference>
<dbReference type="PANTHER" id="PTHR21198:SF2">
    <property type="entry name" value="GLUTAMATE RACEMASE"/>
    <property type="match status" value="1"/>
</dbReference>
<dbReference type="Pfam" id="PF01177">
    <property type="entry name" value="Asp_Glu_race"/>
    <property type="match status" value="1"/>
</dbReference>
<dbReference type="SUPFAM" id="SSF53681">
    <property type="entry name" value="Aspartate/glutamate racemase"/>
    <property type="match status" value="2"/>
</dbReference>
<dbReference type="PROSITE" id="PS00923">
    <property type="entry name" value="ASP_GLU_RACEMASE_1"/>
    <property type="match status" value="1"/>
</dbReference>
<dbReference type="PROSITE" id="PS00924">
    <property type="entry name" value="ASP_GLU_RACEMASE_2"/>
    <property type="match status" value="1"/>
</dbReference>
<proteinExistence type="inferred from homology"/>
<protein>
    <recommendedName>
        <fullName evidence="1">Glutamate racemase</fullName>
        <ecNumber evidence="1">5.1.1.3</ecNumber>
    </recommendedName>
</protein>
<evidence type="ECO:0000255" key="1">
    <source>
        <dbReference type="HAMAP-Rule" id="MF_00258"/>
    </source>
</evidence>
<reference key="1">
    <citation type="submission" date="2008-04" db="EMBL/GenBank/DDBJ databases">
        <title>Complete sequence of chromosome of Exiguobacterium sibiricum 255-15.</title>
        <authorList>
            <consortium name="US DOE Joint Genome Institute"/>
            <person name="Copeland A."/>
            <person name="Lucas S."/>
            <person name="Lapidus A."/>
            <person name="Glavina del Rio T."/>
            <person name="Dalin E."/>
            <person name="Tice H."/>
            <person name="Bruce D."/>
            <person name="Goodwin L."/>
            <person name="Pitluck S."/>
            <person name="Kiss H."/>
            <person name="Chertkov O."/>
            <person name="Monk C."/>
            <person name="Brettin T."/>
            <person name="Detter J.C."/>
            <person name="Han C."/>
            <person name="Kuske C.R."/>
            <person name="Schmutz J."/>
            <person name="Larimer F."/>
            <person name="Land M."/>
            <person name="Hauser L."/>
            <person name="Kyrpides N."/>
            <person name="Mikhailova N."/>
            <person name="Vishnivetskaya T."/>
            <person name="Rodrigues D.F."/>
            <person name="Gilichinsky D."/>
            <person name="Tiedje J."/>
            <person name="Richardson P."/>
        </authorList>
    </citation>
    <scope>NUCLEOTIDE SEQUENCE [LARGE SCALE GENOMIC DNA]</scope>
    <source>
        <strain>DSM 17290 / CCUG 55495 / CIP 109462 / JCM 13490 / 255-15</strain>
    </source>
</reference>
<feature type="chain" id="PRO_1000114044" description="Glutamate racemase">
    <location>
        <begin position="1"/>
        <end position="271"/>
    </location>
</feature>
<feature type="active site" description="Proton donor/acceptor" evidence="1">
    <location>
        <position position="72"/>
    </location>
</feature>
<feature type="active site" description="Proton donor/acceptor" evidence="1">
    <location>
        <position position="183"/>
    </location>
</feature>
<feature type="binding site" evidence="1">
    <location>
        <begin position="9"/>
        <end position="10"/>
    </location>
    <ligand>
        <name>substrate</name>
    </ligand>
</feature>
<feature type="binding site" evidence="1">
    <location>
        <begin position="41"/>
        <end position="42"/>
    </location>
    <ligand>
        <name>substrate</name>
    </ligand>
</feature>
<feature type="binding site" evidence="1">
    <location>
        <begin position="73"/>
        <end position="74"/>
    </location>
    <ligand>
        <name>substrate</name>
    </ligand>
</feature>
<feature type="binding site" evidence="1">
    <location>
        <begin position="184"/>
        <end position="185"/>
    </location>
    <ligand>
        <name>substrate</name>
    </ligand>
</feature>